<sequence>MSWGTELWDQFDNLEKHTQWGIDILEKYIKFVKERTEIELSYAKQLRNLSKKYQPKKNSKEEEEYKYTSCKAFISNLNEMNDYAGQHEVISENMASQIIVDLARYVQELKQERKSNFHDGRKAQQHIETCWKQLESSKRRFERDCKEADRAQQYFEKMDADINVTKADVEKARQQAQIRHQMAEDSKADYSSILQKFNHEQHEYYHTHIPNIFQKIQEMEERRIVRMGESMKTYAEVDRQVIPIIGKCLDGIVKAAESIDQKNDSQLVIEAYKSGFEPPGDIEFEDYTQPMKRTVSDNSLSNSRGEGKPDLKFGGKSKGKLWPFIKKNKLMSLLTSPHQPPPPPPASASPSAVPNGPQSPKQQKEPLSHRFNEFMTSKPKIHCFRSLKRGLSLKLGATPEDFSNLPPEQRRKKLQQKVDELNKEIQKEMDQRDAITKMKDVYLKNPQMGDPASLDHKLAEVSQNIEKLRVETQKFEAWLAEVEGRLPARSEQARRQSGLYDSQNPPTVNNCAQDRESPDGSYTEEQSQESEMKVLATDFDDEFDDEEPLPAIGTCKALYTFEGQNEGTISVVEGETLYVIEEDKGDGWTRIRRNEDEEGYVPTSYVEVCLDKNAKDS</sequence>
<gene>
    <name type="primary">FNBP1</name>
    <name type="synonym">FBP17</name>
    <name type="synonym">KIAA0554</name>
</gene>
<organism>
    <name type="scientific">Homo sapiens</name>
    <name type="common">Human</name>
    <dbReference type="NCBI Taxonomy" id="9606"/>
    <lineage>
        <taxon>Eukaryota</taxon>
        <taxon>Metazoa</taxon>
        <taxon>Chordata</taxon>
        <taxon>Craniata</taxon>
        <taxon>Vertebrata</taxon>
        <taxon>Euteleostomi</taxon>
        <taxon>Mammalia</taxon>
        <taxon>Eutheria</taxon>
        <taxon>Euarchontoglires</taxon>
        <taxon>Primates</taxon>
        <taxon>Haplorrhini</taxon>
        <taxon>Catarrhini</taxon>
        <taxon>Hominidae</taxon>
        <taxon>Homo</taxon>
    </lineage>
</organism>
<keyword id="KW-0002">3D-structure</keyword>
<keyword id="KW-0007">Acetylation</keyword>
<keyword id="KW-0025">Alternative splicing</keyword>
<keyword id="KW-1003">Cell membrane</keyword>
<keyword id="KW-0160">Chromosomal rearrangement</keyword>
<keyword id="KW-0168">Coated pit</keyword>
<keyword id="KW-0175">Coiled coil</keyword>
<keyword id="KW-0963">Cytoplasm</keyword>
<keyword id="KW-0968">Cytoplasmic vesicle</keyword>
<keyword id="KW-0206">Cytoskeleton</keyword>
<keyword id="KW-0254">Endocytosis</keyword>
<keyword id="KW-0446">Lipid-binding</keyword>
<keyword id="KW-0458">Lysosome</keyword>
<keyword id="KW-0472">Membrane</keyword>
<keyword id="KW-0597">Phosphoprotein</keyword>
<keyword id="KW-1267">Proteomics identification</keyword>
<keyword id="KW-1185">Reference proteome</keyword>
<keyword id="KW-0728">SH3 domain</keyword>
<accession>Q96RU3</accession>
<accession>B7ZL12</accession>
<accession>E9PGQ4</accession>
<accession>O60301</accession>
<accession>Q3MIN8</accession>
<accession>Q5TC87</accession>
<accession>Q5TC88</accession>
<accession>Q6P658</accession>
<accession>Q7LGG2</accession>
<accession>Q9H8H8</accession>
<accession>Q9NWD1</accession>
<reference key="1">
    <citation type="journal article" date="2001" name="Proc. Natl. Acad. Sci. U.S.A.">
        <title>The human formin-binding protein 17 (FBP17) interacts with sorting nexin, SNX2, and is an MLL-fusion partner in acute myelogeneous leukemia.</title>
        <authorList>
            <person name="Fuchs U."/>
            <person name="Rehkamp G.F."/>
            <person name="Haas O.A."/>
            <person name="Slany R."/>
            <person name="Koenig M."/>
            <person name="Bojesen S."/>
            <person name="Bohle R.M."/>
            <person name="Damm-Welk C."/>
            <person name="Ludwig W.-D."/>
            <person name="Harbott J."/>
            <person name="Borkhardt A."/>
        </authorList>
    </citation>
    <scope>NUCLEOTIDE SEQUENCE [MRNA] (ISOFORM 1)</scope>
    <scope>INTERACTION WITH SNX2</scope>
    <scope>SUBCELLULAR LOCATION</scope>
    <scope>TISSUE SPECIFICITY</scope>
    <scope>CHROMOSOMAL TRANSLOCATION WITH KMT2A/MLL1</scope>
</reference>
<reference key="2">
    <citation type="journal article" date="1998" name="DNA Res.">
        <title>Prediction of the coding sequences of unidentified human genes. IX. The complete sequences of 100 new cDNA clones from brain which can code for large proteins in vitro.</title>
        <authorList>
            <person name="Nagase T."/>
            <person name="Ishikawa K."/>
            <person name="Miyajima N."/>
            <person name="Tanaka A."/>
            <person name="Kotani H."/>
            <person name="Nomura N."/>
            <person name="Ohara O."/>
        </authorList>
    </citation>
    <scope>NUCLEOTIDE SEQUENCE [LARGE SCALE MRNA] (ISOFORM 1)</scope>
    <source>
        <tissue>Brain</tissue>
    </source>
</reference>
<reference key="3">
    <citation type="journal article" date="2004" name="Nat. Genet.">
        <title>Complete sequencing and characterization of 21,243 full-length human cDNAs.</title>
        <authorList>
            <person name="Ota T."/>
            <person name="Suzuki Y."/>
            <person name="Nishikawa T."/>
            <person name="Otsuki T."/>
            <person name="Sugiyama T."/>
            <person name="Irie R."/>
            <person name="Wakamatsu A."/>
            <person name="Hayashi K."/>
            <person name="Sato H."/>
            <person name="Nagai K."/>
            <person name="Kimura K."/>
            <person name="Makita H."/>
            <person name="Sekine M."/>
            <person name="Obayashi M."/>
            <person name="Nishi T."/>
            <person name="Shibahara T."/>
            <person name="Tanaka T."/>
            <person name="Ishii S."/>
            <person name="Yamamoto J."/>
            <person name="Saito K."/>
            <person name="Kawai Y."/>
            <person name="Isono Y."/>
            <person name="Nakamura Y."/>
            <person name="Nagahari K."/>
            <person name="Murakami K."/>
            <person name="Yasuda T."/>
            <person name="Iwayanagi T."/>
            <person name="Wagatsuma M."/>
            <person name="Shiratori A."/>
            <person name="Sudo H."/>
            <person name="Hosoiri T."/>
            <person name="Kaku Y."/>
            <person name="Kodaira H."/>
            <person name="Kondo H."/>
            <person name="Sugawara M."/>
            <person name="Takahashi M."/>
            <person name="Kanda K."/>
            <person name="Yokoi T."/>
            <person name="Furuya T."/>
            <person name="Kikkawa E."/>
            <person name="Omura Y."/>
            <person name="Abe K."/>
            <person name="Kamihara K."/>
            <person name="Katsuta N."/>
            <person name="Sato K."/>
            <person name="Tanikawa M."/>
            <person name="Yamazaki M."/>
            <person name="Ninomiya K."/>
            <person name="Ishibashi T."/>
            <person name="Yamashita H."/>
            <person name="Murakawa K."/>
            <person name="Fujimori K."/>
            <person name="Tanai H."/>
            <person name="Kimata M."/>
            <person name="Watanabe M."/>
            <person name="Hiraoka S."/>
            <person name="Chiba Y."/>
            <person name="Ishida S."/>
            <person name="Ono Y."/>
            <person name="Takiguchi S."/>
            <person name="Watanabe S."/>
            <person name="Yosida M."/>
            <person name="Hotuta T."/>
            <person name="Kusano J."/>
            <person name="Kanehori K."/>
            <person name="Takahashi-Fujii A."/>
            <person name="Hara H."/>
            <person name="Tanase T.-O."/>
            <person name="Nomura Y."/>
            <person name="Togiya S."/>
            <person name="Komai F."/>
            <person name="Hara R."/>
            <person name="Takeuchi K."/>
            <person name="Arita M."/>
            <person name="Imose N."/>
            <person name="Musashino K."/>
            <person name="Yuuki H."/>
            <person name="Oshima A."/>
            <person name="Sasaki N."/>
            <person name="Aotsuka S."/>
            <person name="Yoshikawa Y."/>
            <person name="Matsunawa H."/>
            <person name="Ichihara T."/>
            <person name="Shiohata N."/>
            <person name="Sano S."/>
            <person name="Moriya S."/>
            <person name="Momiyama H."/>
            <person name="Satoh N."/>
            <person name="Takami S."/>
            <person name="Terashima Y."/>
            <person name="Suzuki O."/>
            <person name="Nakagawa S."/>
            <person name="Senoh A."/>
            <person name="Mizoguchi H."/>
            <person name="Goto Y."/>
            <person name="Shimizu F."/>
            <person name="Wakebe H."/>
            <person name="Hishigaki H."/>
            <person name="Watanabe T."/>
            <person name="Sugiyama A."/>
            <person name="Takemoto M."/>
            <person name="Kawakami B."/>
            <person name="Yamazaki M."/>
            <person name="Watanabe K."/>
            <person name="Kumagai A."/>
            <person name="Itakura S."/>
            <person name="Fukuzumi Y."/>
            <person name="Fujimori Y."/>
            <person name="Komiyama M."/>
            <person name="Tashiro H."/>
            <person name="Tanigami A."/>
            <person name="Fujiwara T."/>
            <person name="Ono T."/>
            <person name="Yamada K."/>
            <person name="Fujii Y."/>
            <person name="Ozaki K."/>
            <person name="Hirao M."/>
            <person name="Ohmori Y."/>
            <person name="Kawabata A."/>
            <person name="Hikiji T."/>
            <person name="Kobatake N."/>
            <person name="Inagaki H."/>
            <person name="Ikema Y."/>
            <person name="Okamoto S."/>
            <person name="Okitani R."/>
            <person name="Kawakami T."/>
            <person name="Noguchi S."/>
            <person name="Itoh T."/>
            <person name="Shigeta K."/>
            <person name="Senba T."/>
            <person name="Matsumura K."/>
            <person name="Nakajima Y."/>
            <person name="Mizuno T."/>
            <person name="Morinaga M."/>
            <person name="Sasaki M."/>
            <person name="Togashi T."/>
            <person name="Oyama M."/>
            <person name="Hata H."/>
            <person name="Watanabe M."/>
            <person name="Komatsu T."/>
            <person name="Mizushima-Sugano J."/>
            <person name="Satoh T."/>
            <person name="Shirai Y."/>
            <person name="Takahashi Y."/>
            <person name="Nakagawa K."/>
            <person name="Okumura K."/>
            <person name="Nagase T."/>
            <person name="Nomura N."/>
            <person name="Kikuchi H."/>
            <person name="Masuho Y."/>
            <person name="Yamashita R."/>
            <person name="Nakai K."/>
            <person name="Yada T."/>
            <person name="Nakamura Y."/>
            <person name="Ohara O."/>
            <person name="Isogai T."/>
            <person name="Sugano S."/>
        </authorList>
    </citation>
    <scope>NUCLEOTIDE SEQUENCE [LARGE SCALE MRNA] (ISOFORM 3)</scope>
    <scope>NUCLEOTIDE SEQUENCE [LARGE SCALE MRNA] OF 36-617 (ISOFORM 2)</scope>
    <scope>VARIANT ASN-490</scope>
    <source>
        <tissue>Embryo</tissue>
        <tissue>Placenta</tissue>
    </source>
</reference>
<reference key="4">
    <citation type="journal article" date="2004" name="Nature">
        <title>DNA sequence and analysis of human chromosome 9.</title>
        <authorList>
            <person name="Humphray S.J."/>
            <person name="Oliver K."/>
            <person name="Hunt A.R."/>
            <person name="Plumb R.W."/>
            <person name="Loveland J.E."/>
            <person name="Howe K.L."/>
            <person name="Andrews T.D."/>
            <person name="Searle S."/>
            <person name="Hunt S.E."/>
            <person name="Scott C.E."/>
            <person name="Jones M.C."/>
            <person name="Ainscough R."/>
            <person name="Almeida J.P."/>
            <person name="Ambrose K.D."/>
            <person name="Ashwell R.I.S."/>
            <person name="Babbage A.K."/>
            <person name="Babbage S."/>
            <person name="Bagguley C.L."/>
            <person name="Bailey J."/>
            <person name="Banerjee R."/>
            <person name="Barker D.J."/>
            <person name="Barlow K.F."/>
            <person name="Bates K."/>
            <person name="Beasley H."/>
            <person name="Beasley O."/>
            <person name="Bird C.P."/>
            <person name="Bray-Allen S."/>
            <person name="Brown A.J."/>
            <person name="Brown J.Y."/>
            <person name="Burford D."/>
            <person name="Burrill W."/>
            <person name="Burton J."/>
            <person name="Carder C."/>
            <person name="Carter N.P."/>
            <person name="Chapman J.C."/>
            <person name="Chen Y."/>
            <person name="Clarke G."/>
            <person name="Clark S.Y."/>
            <person name="Clee C.M."/>
            <person name="Clegg S."/>
            <person name="Collier R.E."/>
            <person name="Corby N."/>
            <person name="Crosier M."/>
            <person name="Cummings A.T."/>
            <person name="Davies J."/>
            <person name="Dhami P."/>
            <person name="Dunn M."/>
            <person name="Dutta I."/>
            <person name="Dyer L.W."/>
            <person name="Earthrowl M.E."/>
            <person name="Faulkner L."/>
            <person name="Fleming C.J."/>
            <person name="Frankish A."/>
            <person name="Frankland J.A."/>
            <person name="French L."/>
            <person name="Fricker D.G."/>
            <person name="Garner P."/>
            <person name="Garnett J."/>
            <person name="Ghori J."/>
            <person name="Gilbert J.G.R."/>
            <person name="Glison C."/>
            <person name="Grafham D.V."/>
            <person name="Gribble S."/>
            <person name="Griffiths C."/>
            <person name="Griffiths-Jones S."/>
            <person name="Grocock R."/>
            <person name="Guy J."/>
            <person name="Hall R.E."/>
            <person name="Hammond S."/>
            <person name="Harley J.L."/>
            <person name="Harrison E.S.I."/>
            <person name="Hart E.A."/>
            <person name="Heath P.D."/>
            <person name="Henderson C.D."/>
            <person name="Hopkins B.L."/>
            <person name="Howard P.J."/>
            <person name="Howden P.J."/>
            <person name="Huckle E."/>
            <person name="Johnson C."/>
            <person name="Johnson D."/>
            <person name="Joy A.A."/>
            <person name="Kay M."/>
            <person name="Keenan S."/>
            <person name="Kershaw J.K."/>
            <person name="Kimberley A.M."/>
            <person name="King A."/>
            <person name="Knights A."/>
            <person name="Laird G.K."/>
            <person name="Langford C."/>
            <person name="Lawlor S."/>
            <person name="Leongamornlert D.A."/>
            <person name="Leversha M."/>
            <person name="Lloyd C."/>
            <person name="Lloyd D.M."/>
            <person name="Lovell J."/>
            <person name="Martin S."/>
            <person name="Mashreghi-Mohammadi M."/>
            <person name="Matthews L."/>
            <person name="McLaren S."/>
            <person name="McLay K.E."/>
            <person name="McMurray A."/>
            <person name="Milne S."/>
            <person name="Nickerson T."/>
            <person name="Nisbett J."/>
            <person name="Nordsiek G."/>
            <person name="Pearce A.V."/>
            <person name="Peck A.I."/>
            <person name="Porter K.M."/>
            <person name="Pandian R."/>
            <person name="Pelan S."/>
            <person name="Phillimore B."/>
            <person name="Povey S."/>
            <person name="Ramsey Y."/>
            <person name="Rand V."/>
            <person name="Scharfe M."/>
            <person name="Sehra H.K."/>
            <person name="Shownkeen R."/>
            <person name="Sims S.K."/>
            <person name="Skuce C.D."/>
            <person name="Smith M."/>
            <person name="Steward C.A."/>
            <person name="Swarbreck D."/>
            <person name="Sycamore N."/>
            <person name="Tester J."/>
            <person name="Thorpe A."/>
            <person name="Tracey A."/>
            <person name="Tromans A."/>
            <person name="Thomas D.W."/>
            <person name="Wall M."/>
            <person name="Wallis J.M."/>
            <person name="West A.P."/>
            <person name="Whitehead S.L."/>
            <person name="Willey D.L."/>
            <person name="Williams S.A."/>
            <person name="Wilming L."/>
            <person name="Wray P.W."/>
            <person name="Young L."/>
            <person name="Ashurst J.L."/>
            <person name="Coulson A."/>
            <person name="Blocker H."/>
            <person name="Durbin R.M."/>
            <person name="Sulston J.E."/>
            <person name="Hubbard T."/>
            <person name="Jackson M.J."/>
            <person name="Bentley D.R."/>
            <person name="Beck S."/>
            <person name="Rogers J."/>
            <person name="Dunham I."/>
        </authorList>
    </citation>
    <scope>NUCLEOTIDE SEQUENCE [LARGE SCALE GENOMIC DNA]</scope>
</reference>
<reference key="5">
    <citation type="journal article" date="2004" name="Genome Res.">
        <title>The status, quality, and expansion of the NIH full-length cDNA project: the Mammalian Gene Collection (MGC).</title>
        <authorList>
            <consortium name="The MGC Project Team"/>
        </authorList>
    </citation>
    <scope>NUCLEOTIDE SEQUENCE [LARGE SCALE MRNA] (ISOFORMS 1 AND 5)</scope>
    <scope>NUCLEOTIDE SEQUENCE [LARGE SCALE MRNA] OF 1-409 (ISOFORM 4)</scope>
    <source>
        <tissue>Liver</tissue>
        <tissue>Uterus</tissue>
    </source>
</reference>
<reference key="6">
    <citation type="journal article" date="2001" name="J. Biol. Chem.">
        <title>Rich, a rho GTPase-activating protein domain-containing protein involved in signaling by Cdc42 and Rac1.</title>
        <authorList>
            <person name="Richnau N."/>
            <person name="Aspenstroem P."/>
        </authorList>
    </citation>
    <scope>INTERACTION WITH ARHGAP17</scope>
</reference>
<reference key="7">
    <citation type="journal article" date="2002" name="FEBS Lett.">
        <title>Identification of interaction partners of the cytosolic polyproline region of CD95 ligand (CD178).</title>
        <authorList>
            <person name="Ghadimi M.P."/>
            <person name="Sanzenbacher R."/>
            <person name="Thiede B."/>
            <person name="Wenzel J."/>
            <person name="Jing Q."/>
            <person name="Plomann M."/>
            <person name="Borkhardt A."/>
            <person name="Kabelitz D."/>
            <person name="Janssen O."/>
        </authorList>
    </citation>
    <scope>IDENTIFICATION BY MASS SPECTROMETRY</scope>
    <scope>INTERACTION WITH FASLG</scope>
</reference>
<reference key="8">
    <citation type="journal article" date="2003" name="FEBS Lett.">
        <title>The formin-binding protein 17, FBP17, binds via a TNKS binding motif to tankyrase, a protein involved in telomere maintenance.</title>
        <authorList>
            <person name="Fuchs U."/>
            <person name="Rehkamp G.F."/>
            <person name="Slany R."/>
            <person name="Follo M."/>
            <person name="Borkhardt A."/>
        </authorList>
    </citation>
    <scope>INTERACTION WITH SNX2 AND TNKS</scope>
    <scope>SUBCELLULAR LOCATION</scope>
    <scope>MUTAGENESIS OF ARG-515; ASP-519 AND 515-ARG--GLY-520</scope>
</reference>
<reference key="9">
    <citation type="journal article" date="2004" name="Anal. Chem.">
        <title>Robust phosphoproteomic profiling of tyrosine phosphorylation sites from human T cells using immobilized metal affinity chromatography and tandem mass spectrometry.</title>
        <authorList>
            <person name="Brill L.M."/>
            <person name="Salomon A.R."/>
            <person name="Ficarro S.B."/>
            <person name="Mukherji M."/>
            <person name="Stettler-Gill M."/>
            <person name="Peters E.C."/>
        </authorList>
    </citation>
    <scope>IDENTIFICATION BY MASS SPECTROMETRY [LARGE SCALE ANALYSIS]</scope>
    <source>
        <tissue>Leukemic T-cell</tissue>
    </source>
</reference>
<reference key="10">
    <citation type="journal article" date="2004" name="J. Biol. Chem.">
        <title>A novel dynamin-associating molecule, formin-binding protein 17, induces tubular membrane invaginations and participates in endocytosis.</title>
        <authorList>
            <person name="Kamioka Y."/>
            <person name="Fukuhara S."/>
            <person name="Sawa H."/>
            <person name="Nagashima K."/>
            <person name="Masuda M."/>
            <person name="Matsuda M."/>
            <person name="Mochizuki N."/>
        </authorList>
    </citation>
    <scope>FUNCTION</scope>
    <scope>SELF-ASSOCIATION</scope>
    <scope>INTERACTION WITH DNM1; DNM2 AND DNM3</scope>
    <scope>SUBCELLULAR LOCATION</scope>
    <scope>TISSUE SPECIFICITY</scope>
    <scope>MUTAGENESIS OF PRO-602</scope>
</reference>
<reference key="11">
    <citation type="journal article" date="2004" name="Mol. Biol. Cell">
        <title>AKAP350 interaction with cdc42 interacting protein 4 at the Golgi apparatus.</title>
        <authorList>
            <person name="Larocca M.C."/>
            <person name="Shanks R.A."/>
            <person name="Tian L."/>
            <person name="Nelson D.L."/>
            <person name="Stewart D.M."/>
            <person name="Goldenring J.R."/>
        </authorList>
    </citation>
    <scope>INTERACTION WITH AKAP9</scope>
    <scope>SUBCELLULAR LOCATION</scope>
</reference>
<reference key="12">
    <citation type="journal article" date="2005" name="Dev. Cell">
        <title>Dynamin and the actin cytoskeleton cooperatively regulate plasma membrane invagination by BAR and F-BAR proteins.</title>
        <authorList>
            <person name="Itoh T."/>
            <person name="Erdmann K.S."/>
            <person name="Roux A."/>
            <person name="Habermann B."/>
            <person name="Werner H."/>
            <person name="De Camilli P."/>
        </authorList>
    </citation>
    <scope>FUNCTION</scope>
    <scope>SELF-ASSOCIATION</scope>
    <scope>INTERACTION WITH DNM1 AND WASL</scope>
    <scope>SUBCELLULAR LOCATION</scope>
    <scope>MUTAGENESIS OF LEU-7</scope>
</reference>
<reference key="13">
    <citation type="journal article" date="2006" name="Cell. Signal.">
        <title>Regulation of FasL expression: a SH3 domain containing protein family involved in the lysosomal association of FasL.</title>
        <authorList>
            <person name="Qian J."/>
            <person name="Chen W."/>
            <person name="Lettau M."/>
            <person name="Podda G."/>
            <person name="Zoernig M."/>
            <person name="Kabelitz D."/>
            <person name="Janssen O."/>
        </authorList>
    </citation>
    <scope>FUNCTION</scope>
    <scope>INTERACTION WITH FASLG</scope>
    <scope>SUBCELLULAR LOCATION</scope>
</reference>
<reference key="14">
    <citation type="journal article" date="2006" name="Exp. Cell Res.">
        <title>The diaphanous-related formin DAAM1 collaborates with the Rho GTPases RhoA and Cdc42, CIP4 and Src in regulating cell morphogenesis and actin dynamics.</title>
        <authorList>
            <person name="Aspenstroem P."/>
            <person name="Richnau N."/>
            <person name="Johansson A.-S."/>
        </authorList>
    </citation>
    <scope>INTERACTION WITH DAAM1; DIAPH1 AND DIAPH2</scope>
</reference>
<reference key="15">
    <citation type="journal article" date="2006" name="J. Cell Biol.">
        <title>Coordination between the actin cytoskeleton and membrane deformation by a novel membrane tubulation domain of PCH proteins is involved in endocytosis.</title>
        <authorList>
            <person name="Tsujita K."/>
            <person name="Suetsugu S."/>
            <person name="Sasaki N."/>
            <person name="Furutani M."/>
            <person name="Oikawa T."/>
            <person name="Takenawa T."/>
        </authorList>
    </citation>
    <scope>FUNCTION</scope>
    <scope>INTERACTION WITH DNM2 AND WASL</scope>
    <scope>SUBCELLULAR LOCATION</scope>
    <scope>MUTAGENESIS OF LYS-33; ARG-35; 51-LYS-LYS-52 AND 113-ARG-LYS-114</scope>
</reference>
<reference key="16">
    <citation type="journal article" date="2006" name="Nat. Biotechnol.">
        <title>A probability-based approach for high-throughput protein phosphorylation analysis and site localization.</title>
        <authorList>
            <person name="Beausoleil S.A."/>
            <person name="Villen J."/>
            <person name="Gerber S.A."/>
            <person name="Rush J."/>
            <person name="Gygi S.P."/>
        </authorList>
    </citation>
    <scope>PHOSPHORYLATION [LARGE SCALE ANALYSIS] AT SER-296</scope>
    <scope>IDENTIFICATION BY MASS SPECTROMETRY [LARGE SCALE ANALYSIS]</scope>
    <source>
        <tissue>Cervix carcinoma</tissue>
    </source>
</reference>
<reference key="17">
    <citation type="journal article" date="2008" name="J. Proteome Res.">
        <title>Phosphorylation analysis of primary human T lymphocytes using sequential IMAC and titanium oxide enrichment.</title>
        <authorList>
            <person name="Carrascal M."/>
            <person name="Ovelleiro D."/>
            <person name="Casas V."/>
            <person name="Gay M."/>
            <person name="Abian J."/>
        </authorList>
    </citation>
    <scope>IDENTIFICATION BY MASS SPECTROMETRY [LARGE SCALE ANALYSIS]</scope>
    <source>
        <tissue>T-cell</tissue>
    </source>
</reference>
<reference key="18">
    <citation type="journal article" date="2008" name="Proc. Natl. Acad. Sci. U.S.A.">
        <title>A quantitative atlas of mitotic phosphorylation.</title>
        <authorList>
            <person name="Dephoure N."/>
            <person name="Zhou C."/>
            <person name="Villen J."/>
            <person name="Beausoleil S.A."/>
            <person name="Bakalarski C.E."/>
            <person name="Elledge S.J."/>
            <person name="Gygi S.P."/>
        </authorList>
    </citation>
    <scope>PHOSPHORYLATION [LARGE SCALE ANALYSIS] AT SER-296; SER-299; SER-349 AND SER-359</scope>
    <scope>IDENTIFICATION BY MASS SPECTROMETRY [LARGE SCALE ANALYSIS]</scope>
    <source>
        <tissue>Cervix carcinoma</tissue>
    </source>
</reference>
<reference key="19">
    <citation type="journal article" date="2009" name="Anal. Chem.">
        <title>Lys-N and trypsin cover complementary parts of the phosphoproteome in a refined SCX-based approach.</title>
        <authorList>
            <person name="Gauci S."/>
            <person name="Helbig A.O."/>
            <person name="Slijper M."/>
            <person name="Krijgsveld J."/>
            <person name="Heck A.J."/>
            <person name="Mohammed S."/>
        </authorList>
    </citation>
    <scope>IDENTIFICATION BY MASS SPECTROMETRY [LARGE SCALE ANALYSIS]</scope>
</reference>
<reference key="20">
    <citation type="journal article" date="2009" name="Sci. Signal.">
        <title>Quantitative phosphoproteomic analysis of T cell receptor signaling reveals system-wide modulation of protein-protein interactions.</title>
        <authorList>
            <person name="Mayya V."/>
            <person name="Lundgren D.H."/>
            <person name="Hwang S.-I."/>
            <person name="Rezaul K."/>
            <person name="Wu L."/>
            <person name="Eng J.K."/>
            <person name="Rodionov V."/>
            <person name="Han D.K."/>
        </authorList>
    </citation>
    <scope>PHOSPHORYLATION [LARGE SCALE ANALYSIS] AT SER-359</scope>
    <scope>IDENTIFICATION BY MASS SPECTROMETRY [LARGE SCALE ANALYSIS]</scope>
    <source>
        <tissue>Leukemic T-cell</tissue>
    </source>
</reference>
<reference key="21">
    <citation type="journal article" date="2009" name="Science">
        <title>Lysine acetylation targets protein complexes and co-regulates major cellular functions.</title>
        <authorList>
            <person name="Choudhary C."/>
            <person name="Kumar C."/>
            <person name="Gnad F."/>
            <person name="Nielsen M.L."/>
            <person name="Rehman M."/>
            <person name="Walther T.C."/>
            <person name="Olsen J.V."/>
            <person name="Mann M."/>
        </authorList>
    </citation>
    <scope>ACETYLATION [LARGE SCALE ANALYSIS] AT LYS-66 AND LYS-110</scope>
    <scope>IDENTIFICATION BY MASS SPECTROMETRY [LARGE SCALE ANALYSIS]</scope>
</reference>
<reference key="22">
    <citation type="journal article" date="2010" name="Sci. Signal.">
        <title>Quantitative phosphoproteomics reveals widespread full phosphorylation site occupancy during mitosis.</title>
        <authorList>
            <person name="Olsen J.V."/>
            <person name="Vermeulen M."/>
            <person name="Santamaria A."/>
            <person name="Kumar C."/>
            <person name="Miller M.L."/>
            <person name="Jensen L.J."/>
            <person name="Gnad F."/>
            <person name="Cox J."/>
            <person name="Jensen T.S."/>
            <person name="Nigg E.A."/>
            <person name="Brunak S."/>
            <person name="Mann M."/>
        </authorList>
    </citation>
    <scope>PHOSPHORYLATION [LARGE SCALE ANALYSIS] AT SER-296 AND SER-359</scope>
    <scope>IDENTIFICATION BY MASS SPECTROMETRY [LARGE SCALE ANALYSIS]</scope>
    <source>
        <tissue>Cervix carcinoma</tissue>
    </source>
</reference>
<reference key="23">
    <citation type="journal article" date="2011" name="BMC Syst. Biol.">
        <title>Initial characterization of the human central proteome.</title>
        <authorList>
            <person name="Burkard T.R."/>
            <person name="Planyavsky M."/>
            <person name="Kaupe I."/>
            <person name="Breitwieser F.P."/>
            <person name="Buerckstuemmer T."/>
            <person name="Bennett K.L."/>
            <person name="Superti-Furga G."/>
            <person name="Colinge J."/>
        </authorList>
    </citation>
    <scope>IDENTIFICATION BY MASS SPECTROMETRY [LARGE SCALE ANALYSIS]</scope>
</reference>
<reference key="24">
    <citation type="journal article" date="2011" name="Sci. Signal.">
        <title>System-wide temporal characterization of the proteome and phosphoproteome of human embryonic stem cell differentiation.</title>
        <authorList>
            <person name="Rigbolt K.T."/>
            <person name="Prokhorova T.A."/>
            <person name="Akimov V."/>
            <person name="Henningsen J."/>
            <person name="Johansen P.T."/>
            <person name="Kratchmarova I."/>
            <person name="Kassem M."/>
            <person name="Mann M."/>
            <person name="Olsen J.V."/>
            <person name="Blagoev B."/>
        </authorList>
    </citation>
    <scope>PHOSPHORYLATION [LARGE SCALE ANALYSIS] AT SER-296 AND SER-299</scope>
    <scope>IDENTIFICATION BY MASS SPECTROMETRY [LARGE SCALE ANALYSIS]</scope>
</reference>
<reference key="25">
    <citation type="journal article" date="2013" name="J. Proteome Res.">
        <title>Toward a comprehensive characterization of a human cancer cell phosphoproteome.</title>
        <authorList>
            <person name="Zhou H."/>
            <person name="Di Palma S."/>
            <person name="Preisinger C."/>
            <person name="Peng M."/>
            <person name="Polat A.N."/>
            <person name="Heck A.J."/>
            <person name="Mohammed S."/>
        </authorList>
    </citation>
    <scope>PHOSPHORYLATION [LARGE SCALE ANALYSIS] AT SER-296 AND SER-359</scope>
    <scope>IDENTIFICATION BY MASS SPECTROMETRY [LARGE SCALE ANALYSIS]</scope>
    <source>
        <tissue>Cervix carcinoma</tissue>
        <tissue>Erythroleukemia</tissue>
    </source>
</reference>
<reference key="26">
    <citation type="journal article" date="2014" name="J. Proteomics">
        <title>An enzyme assisted RP-RPLC approach for in-depth analysis of human liver phosphoproteome.</title>
        <authorList>
            <person name="Bian Y."/>
            <person name="Song C."/>
            <person name="Cheng K."/>
            <person name="Dong M."/>
            <person name="Wang F."/>
            <person name="Huang J."/>
            <person name="Sun D."/>
            <person name="Wang L."/>
            <person name="Ye M."/>
            <person name="Zou H."/>
        </authorList>
    </citation>
    <scope>PHOSPHORYLATION [LARGE SCALE ANALYSIS] AT SER-296</scope>
    <scope>IDENTIFICATION BY MASS SPECTROMETRY [LARGE SCALE ANALYSIS]</scope>
    <source>
        <tissue>Liver</tissue>
    </source>
</reference>
<reference key="27">
    <citation type="journal article" date="2007" name="Cell">
        <title>Curved EFC/F-BAR-domain dimers are joined end to end into a filament for membrane invagination in endocytosis.</title>
        <authorList>
            <person name="Shimada A."/>
            <person name="Niwa H."/>
            <person name="Tsujita K."/>
            <person name="Suetsugu S."/>
            <person name="Nitta K."/>
            <person name="Hanawa-Suetsugu K."/>
            <person name="Akasaka R."/>
            <person name="Nishino Y."/>
            <person name="Toyama M."/>
            <person name="Chen L."/>
            <person name="Liu Z.-J."/>
            <person name="Wang B.C."/>
            <person name="Yamamoto M."/>
            <person name="Terada T."/>
            <person name="Miyazawa A."/>
            <person name="Tanaka A."/>
            <person name="Sugano S."/>
            <person name="Shirouzu M."/>
            <person name="Nagayama K."/>
            <person name="Takenawa T."/>
            <person name="Yokoyama S."/>
        </authorList>
    </citation>
    <scope>X-RAY CRYSTALLOGRAPHY (2.61 ANGSTROMS) OF 1-300</scope>
    <scope>FUNCTION</scope>
    <scope>SUBUNIT</scope>
    <scope>SUBCELLULAR LOCATION</scope>
    <scope>DOMAIN F-BAR</scope>
    <scope>COILED-COIL DOMAIN</scope>
    <scope>MUTAGENESIS OF LYS-33; THR-165; LYS-166; ASP-168 AND PRO-210</scope>
</reference>
<comment type="function">
    <text evidence="1 14 15 16 17 19">May act as a link between RND2 signaling and regulation of the actin cytoskeleton (By similarity). Required to coordinate membrane tubulation with reorganization of the actin cytoskeleton during the late stage of clathrin-mediated endocytosis. Binds to lipids such as phosphatidylinositol 4,5-bisphosphate and phosphatidylserine and promotes membrane invagination and the formation of tubules. Also enhances actin polymerization via the recruitment of WASL/N-WASP, which in turn activates the Arp2/3 complex. Actin polymerization may promote the fission of membrane tubules to form endocytic vesicles. May be required for the lysosomal retention of FASLG/FASL.</text>
</comment>
<comment type="subunit">
    <text evidence="1 8 9 10 11 13 14 15 16 17 18 19">Interacts specifically with GTP-bound RND2 and CDC42. Interacts with PDE6G and microtubules (By similarity). Homodimerizes, the dimers can polymerize end-to-end to form filamentous structures. Interacts with AKAP9, ARHGAP17, DAAM1, DIAPH1, DIAPH2, DNM1, DNM2, DNM3, FASLG/FASL, SNX2 and WASL/N-WASP. May interact with TNKS.</text>
</comment>
<comment type="interaction">
    <interactant intactId="EBI-1111248">
        <id>Q96RU3</id>
    </interactant>
    <interactant intactId="EBI-713135">
        <id>Q05193</id>
        <label>DNM1</label>
    </interactant>
    <organismsDiffer>false</organismsDiffer>
    <experiments>5</experiments>
</comment>
<comment type="interaction">
    <interactant intactId="EBI-1111248">
        <id>Q96RU3</id>
    </interactant>
    <interactant intactId="EBI-495538">
        <id>P48023</id>
        <label>FASLG</label>
    </interactant>
    <organismsDiffer>false</organismsDiffer>
    <experiments>4</experiments>
</comment>
<comment type="interaction">
    <interactant intactId="EBI-1111248">
        <id>Q96RU3</id>
    </interactant>
    <interactant intactId="EBI-1111248">
        <id>Q96RU3</id>
        <label>FNBP1</label>
    </interactant>
    <organismsDiffer>false</organismsDiffer>
    <experiments>3</experiments>
</comment>
<comment type="interaction">
    <interactant intactId="EBI-1111248">
        <id>Q96RU3</id>
    </interactant>
    <interactant intactId="EBI-714058">
        <id>Q5T0N5</id>
        <label>FNBP1L</label>
    </interactant>
    <organismsDiffer>false</organismsDiffer>
    <experiments>2</experiments>
</comment>
<comment type="interaction">
    <interactant intactId="EBI-1111248">
        <id>Q96RU3</id>
    </interactant>
    <interactant intactId="EBI-712001">
        <id>O95166</id>
        <label>GABARAP</label>
    </interactant>
    <organismsDiffer>false</organismsDiffer>
    <experiments>2</experiments>
</comment>
<comment type="interaction">
    <interactant intactId="EBI-1111248">
        <id>Q96RU3</id>
    </interactant>
    <interactant intactId="EBI-1046690">
        <id>O60749</id>
        <label>SNX2</label>
    </interactant>
    <organismsDiffer>false</organismsDiffer>
    <experiments>4</experiments>
</comment>
<comment type="interaction">
    <interactant intactId="EBI-1111248">
        <id>Q96RU3</id>
    </interactant>
    <interactant intactId="EBI-1105254">
        <id>O95271</id>
        <label>TNKS</label>
    </interactant>
    <organismsDiffer>false</organismsDiffer>
    <experiments>4</experiments>
</comment>
<comment type="interaction">
    <interactant intactId="EBI-1111248">
        <id>Q96RU3</id>
    </interactant>
    <interactant intactId="EBI-8008869">
        <id>P97573</id>
        <label>Inpp5d</label>
    </interactant>
    <organismsDiffer>true</organismsDiffer>
    <experiments>2</experiments>
</comment>
<comment type="subcellular location">
    <subcellularLocation>
        <location>Cytoplasm</location>
    </subcellularLocation>
    <subcellularLocation>
        <location>Cytoplasm</location>
        <location>Cytoskeleton</location>
    </subcellularLocation>
    <subcellularLocation>
        <location>Cytoplasm</location>
        <location>Cell cortex</location>
    </subcellularLocation>
    <subcellularLocation>
        <location>Lysosome</location>
    </subcellularLocation>
    <subcellularLocation>
        <location>Cytoplasmic vesicle</location>
    </subcellularLocation>
    <subcellularLocation>
        <location>Cell membrane</location>
        <topology>Peripheral membrane protein</topology>
        <orientation>Cytoplasmic side</orientation>
    </subcellularLocation>
    <subcellularLocation>
        <location>Membrane</location>
        <location>Clathrin-coated pit</location>
    </subcellularLocation>
    <text>Enriched in cortical regions coincident with F-actin. Also localizes to endocytic vesicles and lysosomes.</text>
</comment>
<comment type="alternative products">
    <event type="alternative splicing"/>
    <isoform>
        <id>Q96RU3-1</id>
        <name>1</name>
        <sequence type="displayed"/>
    </isoform>
    <isoform>
        <id>Q96RU3-2</id>
        <name>2</name>
        <sequence type="described" ref="VSP_021695 VSP_021696"/>
    </isoform>
    <isoform>
        <id>Q96RU3-3</id>
        <name>3</name>
        <sequence type="described" ref="VSP_021694 VSP_021696"/>
    </isoform>
    <isoform>
        <id>Q96RU3-4</id>
        <name>4</name>
        <sequence type="described" ref="VSP_021693"/>
    </isoform>
    <isoform>
        <id>Q96RU3-5</id>
        <name>5</name>
        <sequence type="described" ref="VSP_021695"/>
    </isoform>
</comment>
<comment type="tissue specificity">
    <text evidence="9 14">Very highly expressed in the epithelial cells of the gastrointestinal tract, respiratory, reproductive and urinary systems. Also highly expressed in brown adipose tissue, cardiomyocytes, enteric ganglia and glucagon producing cells of the pancreas. Expressed in germ cells of the testis and all regions of the brain.</text>
</comment>
<comment type="domain">
    <text evidence="19">The F-BAR domain binds the phospholipid membrane with its concave surface. The end-to-end polymerization of dimers of these domains provides a curved surface that fits best membranes with around 600 A diameter, and may drive tubulation.</text>
</comment>
<comment type="disease">
    <text>A chromosomal aberration involving FNBP1 is found in acute leukemias. Translocation t(9;11)(q34;q23) with KMT2A/MLL1. The relatively low incidence of the KMT2A/MLL1-FNBP1 fusion protein in acute leukemia may reflect the marginal capacity of this fusion protein to induce cellular transformation.</text>
</comment>
<comment type="similarity">
    <text evidence="22">Belongs to the FNBP1 family.</text>
</comment>
<comment type="sequence caution" evidence="22">
    <conflict type="miscellaneous discrepancy">
        <sequence resource="EMBL-CDS" id="AAH62463"/>
    </conflict>
    <text>Contaminating sequence. Potential poly-A sequence.</text>
</comment>
<comment type="sequence caution" evidence="22">
    <conflict type="erroneous initiation">
        <sequence resource="EMBL-CDS" id="AAK49824"/>
    </conflict>
</comment>
<comment type="sequence caution" evidence="22">
    <conflict type="erroneous initiation">
        <sequence resource="EMBL-CDS" id="BAA25480"/>
    </conflict>
</comment>
<comment type="sequence caution" evidence="22">
    <conflict type="erroneous initiation">
        <sequence resource="EMBL-CDS" id="BAA91451"/>
    </conflict>
</comment>
<comment type="online information" name="Atlas of Genetics and Cytogenetics in Oncology and Haematology">
    <link uri="https://atlasgeneticsoncology.org/gene/353/FBP17"/>
</comment>
<evidence type="ECO:0000250" key="1"/>
<evidence type="ECO:0000250" key="2">
    <source>
        <dbReference type="UniProtKB" id="Q80TY0"/>
    </source>
</evidence>
<evidence type="ECO:0000250" key="3">
    <source>
        <dbReference type="UniProtKB" id="Q8R511"/>
    </source>
</evidence>
<evidence type="ECO:0000255" key="4">
    <source>
        <dbReference type="PROSITE-ProRule" id="PRU00192"/>
    </source>
</evidence>
<evidence type="ECO:0000255" key="5">
    <source>
        <dbReference type="PROSITE-ProRule" id="PRU01077"/>
    </source>
</evidence>
<evidence type="ECO:0000255" key="6">
    <source>
        <dbReference type="PROSITE-ProRule" id="PRU01207"/>
    </source>
</evidence>
<evidence type="ECO:0000256" key="7">
    <source>
        <dbReference type="SAM" id="MobiDB-lite"/>
    </source>
</evidence>
<evidence type="ECO:0000269" key="8">
    <source>
    </source>
</evidence>
<evidence type="ECO:0000269" key="9">
    <source>
    </source>
</evidence>
<evidence type="ECO:0000269" key="10">
    <source>
    </source>
</evidence>
<evidence type="ECO:0000269" key="11">
    <source>
    </source>
</evidence>
<evidence type="ECO:0000269" key="12">
    <source>
    </source>
</evidence>
<evidence type="ECO:0000269" key="13">
    <source>
    </source>
</evidence>
<evidence type="ECO:0000269" key="14">
    <source>
    </source>
</evidence>
<evidence type="ECO:0000269" key="15">
    <source>
    </source>
</evidence>
<evidence type="ECO:0000269" key="16">
    <source>
    </source>
</evidence>
<evidence type="ECO:0000269" key="17">
    <source>
    </source>
</evidence>
<evidence type="ECO:0000269" key="18">
    <source>
    </source>
</evidence>
<evidence type="ECO:0000269" key="19">
    <source>
    </source>
</evidence>
<evidence type="ECO:0000303" key="20">
    <source>
    </source>
</evidence>
<evidence type="ECO:0000303" key="21">
    <source>
    </source>
</evidence>
<evidence type="ECO:0000305" key="22"/>
<evidence type="ECO:0007744" key="23">
    <source>
    </source>
</evidence>
<evidence type="ECO:0007744" key="24">
    <source>
    </source>
</evidence>
<evidence type="ECO:0007744" key="25">
    <source>
    </source>
</evidence>
<evidence type="ECO:0007744" key="26">
    <source>
    </source>
</evidence>
<evidence type="ECO:0007744" key="27">
    <source>
    </source>
</evidence>
<evidence type="ECO:0007744" key="28">
    <source>
    </source>
</evidence>
<evidence type="ECO:0007744" key="29">
    <source>
    </source>
</evidence>
<evidence type="ECO:0007744" key="30">
    <source>
    </source>
</evidence>
<evidence type="ECO:0007829" key="31">
    <source>
        <dbReference type="PDB" id="2EFL"/>
    </source>
</evidence>
<feature type="chain" id="PRO_0000261430" description="Formin-binding protein 1">
    <location>
        <begin position="1"/>
        <end position="617"/>
    </location>
</feature>
<feature type="domain" description="F-BAR" evidence="5">
    <location>
        <begin position="1"/>
        <end position="264"/>
    </location>
</feature>
<feature type="domain" description="REM-1" evidence="6">
    <location>
        <begin position="404"/>
        <end position="481"/>
    </location>
</feature>
<feature type="domain" description="SH3" evidence="4">
    <location>
        <begin position="550"/>
        <end position="611"/>
    </location>
</feature>
<feature type="region of interest" description="Interaction with microtubules" evidence="1">
    <location>
        <begin position="1"/>
        <end position="335"/>
    </location>
</feature>
<feature type="region of interest" description="Required for self-association and induction of membrane tubulation">
    <location>
        <begin position="1"/>
        <end position="79"/>
    </location>
</feature>
<feature type="region of interest" description="Required for self-association and induction of membrane tubulation">
    <location>
        <begin position="251"/>
        <end position="617"/>
    </location>
</feature>
<feature type="region of interest" description="Disordered" evidence="7">
    <location>
        <begin position="280"/>
        <end position="315"/>
    </location>
</feature>
<feature type="region of interest" description="Disordered" evidence="7">
    <location>
        <begin position="333"/>
        <end position="366"/>
    </location>
</feature>
<feature type="region of interest" description="Interaction with RND2" evidence="1">
    <location>
        <begin position="400"/>
        <end position="552"/>
    </location>
</feature>
<feature type="region of interest" description="Disordered" evidence="7">
    <location>
        <begin position="486"/>
        <end position="531"/>
    </location>
</feature>
<feature type="region of interest" description="Interaction with PDE6G" evidence="1">
    <location>
        <begin position="495"/>
        <end position="617"/>
    </location>
</feature>
<feature type="region of interest" description="Required for interaction with TNKS" evidence="11">
    <location>
        <begin position="514"/>
        <end position="617"/>
    </location>
</feature>
<feature type="region of interest" description="Interaction with DNM1 and DNM3" evidence="14">
    <location>
        <begin position="535"/>
        <end position="617"/>
    </location>
</feature>
<feature type="region of interest" description="Interaction with ARHGAP17, DAAM1, DIAPH1 and DIAPH2" evidence="8 18">
    <location>
        <begin position="550"/>
        <end position="617"/>
    </location>
</feature>
<feature type="region of interest" description="Interaction with FASLG">
    <location>
        <begin position="553"/>
        <end position="610"/>
    </location>
</feature>
<feature type="region of interest" description="Interaction with DNM2 and WASL">
    <location>
        <begin position="553"/>
        <end position="609"/>
    </location>
</feature>
<feature type="coiled-coil region" evidence="19">
    <location>
        <begin position="67"/>
        <end position="259"/>
    </location>
</feature>
<feature type="coiled-coil region" evidence="1">
    <location>
        <begin position="398"/>
        <end position="490"/>
    </location>
</feature>
<feature type="compositionally biased region" description="Pro residues" evidence="7">
    <location>
        <begin position="338"/>
        <end position="347"/>
    </location>
</feature>
<feature type="compositionally biased region" description="Polar residues" evidence="7">
    <location>
        <begin position="499"/>
        <end position="512"/>
    </location>
</feature>
<feature type="site" description="Mediates end-to-end attachment of dimers">
    <location>
        <position position="166"/>
    </location>
</feature>
<feature type="modified residue" description="N6-acetyllysine" evidence="25">
    <location>
        <position position="66"/>
    </location>
</feature>
<feature type="modified residue" description="N6-acetyllysine" evidence="25">
    <location>
        <position position="110"/>
    </location>
</feature>
<feature type="modified residue" description="Phosphoserine" evidence="23 24 27 28 29 30">
    <location>
        <position position="296"/>
    </location>
</feature>
<feature type="modified residue" description="Phosphoserine" evidence="24 28">
    <location>
        <position position="299"/>
    </location>
</feature>
<feature type="modified residue" description="Phosphoserine" evidence="24">
    <location>
        <position position="349"/>
    </location>
</feature>
<feature type="modified residue" description="Phosphoserine" evidence="24 26 27 29">
    <location>
        <position position="359"/>
    </location>
</feature>
<feature type="modified residue" description="Phosphoserine" evidence="2">
    <location>
        <position position="497"/>
    </location>
</feature>
<feature type="modified residue" description="Phosphotyrosine" evidence="2">
    <location>
        <position position="500"/>
    </location>
</feature>
<feature type="modified residue" description="Phosphoserine" evidence="3">
    <location>
        <position position="521"/>
    </location>
</feature>
<feature type="splice variant" id="VSP_021693" description="In isoform 4." evidence="21">
    <location>
        <begin position="329"/>
        <end position="394"/>
    </location>
</feature>
<feature type="splice variant" id="VSP_021694" description="In isoform 3." evidence="20">
    <location>
        <begin position="330"/>
        <end position="358"/>
    </location>
</feature>
<feature type="splice variant" id="VSP_021695" description="In isoform 2 and isoform 5." evidence="20 21">
    <location>
        <begin position="391"/>
        <end position="395"/>
    </location>
</feature>
<feature type="splice variant" id="VSP_021696" description="In isoform 2 and isoform 3." evidence="20">
    <original>DS</original>
    <variation>GAKTYI</variation>
    <location>
        <begin position="616"/>
        <end position="617"/>
    </location>
</feature>
<feature type="sequence variant" id="VAR_029388" description="In dbSNP:rs1023000." evidence="12">
    <original>S</original>
    <variation>N</variation>
    <location>
        <position position="490"/>
    </location>
</feature>
<feature type="mutagenesis site" description="Impairs membrane tubulation but does not affect lipid-binding." evidence="16">
    <original>L</original>
    <variation>E</variation>
    <location>
        <position position="7"/>
    </location>
</feature>
<feature type="mutagenesis site" description="Abolishes membrane invagination." evidence="17 19">
    <original>K</original>
    <variation>E</variation>
    <location>
        <position position="33"/>
    </location>
</feature>
<feature type="mutagenesis site" description="Impairs lipid-binding and induction of membrane tubulation; when associated with Q-35." evidence="17 19">
    <original>K</original>
    <variation>Q</variation>
    <location>
        <position position="33"/>
    </location>
</feature>
<feature type="mutagenesis site" description="Impairs lipid-binding and induction of membrane tubulation; when associated with Q-33." evidence="17">
    <original>R</original>
    <variation>Q</variation>
    <location>
        <position position="35"/>
    </location>
</feature>
<feature type="mutagenesis site" description="Impairs lipid-binding and induction of membrane tubulation." evidence="17">
    <original>KK</original>
    <variation>QQ</variation>
    <location>
        <begin position="51"/>
        <end position="52"/>
    </location>
</feature>
<feature type="mutagenesis site" description="Impairs lipid-binding and induction of membrane tubulation." evidence="17">
    <original>RK</original>
    <variation>QQ</variation>
    <location>
        <begin position="113"/>
        <end position="114"/>
    </location>
</feature>
<feature type="mutagenesis site" description="Abolishes membrane invagination." evidence="19">
    <original>T</original>
    <variation>A</variation>
    <location>
        <position position="165"/>
    </location>
</feature>
<feature type="mutagenesis site" description="Abolishes membrane invagination." evidence="19">
    <original>K</original>
    <variation>A</variation>
    <location>
        <position position="166"/>
    </location>
</feature>
<feature type="mutagenesis site" description="No significant effect." evidence="19">
    <original>D</original>
    <variation>A</variation>
    <variation>N</variation>
    <variation>R</variation>
    <location>
        <position position="168"/>
    </location>
</feature>
<feature type="mutagenesis site" description="Disrupts helix kink and moderately increases diameter of the induced tubular membrane." evidence="19">
    <original>P</original>
    <variation>A</variation>
    <location>
        <position position="210"/>
    </location>
</feature>
<feature type="mutagenesis site" description="Abrogates interaction with TNKS." evidence="11">
    <location>
        <begin position="515"/>
        <end position="520"/>
    </location>
</feature>
<feature type="mutagenesis site" description="Impairs interaction with TNKS." evidence="11">
    <original>R</original>
    <variation>A</variation>
    <location>
        <position position="515"/>
    </location>
</feature>
<feature type="mutagenesis site" description="Impairs interaction with TNKS; when associated with A-515." evidence="11">
    <original>D</original>
    <variation>A</variation>
    <location>
        <position position="519"/>
    </location>
</feature>
<feature type="mutagenesis site" description="Abrogates interaction with DNM1, DNM2 and DNM3." evidence="14">
    <original>P</original>
    <variation>L</variation>
    <location>
        <position position="602"/>
    </location>
</feature>
<feature type="sequence conflict" description="In Ref. 3; BAA91451." evidence="22" ref="3">
    <original>K</original>
    <variation>E</variation>
    <location>
        <position position="388"/>
    </location>
</feature>
<feature type="helix" evidence="31">
    <location>
        <begin position="3"/>
        <end position="6"/>
    </location>
</feature>
<feature type="turn" evidence="31">
    <location>
        <begin position="7"/>
        <end position="9"/>
    </location>
</feature>
<feature type="helix" evidence="31">
    <location>
        <begin position="11"/>
        <end position="52"/>
    </location>
</feature>
<feature type="helix" evidence="31">
    <location>
        <begin position="68"/>
        <end position="160"/>
    </location>
</feature>
<feature type="helix" evidence="31">
    <location>
        <begin position="166"/>
        <end position="206"/>
    </location>
</feature>
<feature type="helix" evidence="31">
    <location>
        <begin position="208"/>
        <end position="238"/>
    </location>
</feature>
<feature type="helix" evidence="31">
    <location>
        <begin position="241"/>
        <end position="257"/>
    </location>
</feature>
<feature type="helix" evidence="31">
    <location>
        <begin position="261"/>
        <end position="272"/>
    </location>
</feature>
<proteinExistence type="evidence at protein level"/>
<dbReference type="EMBL" id="AF265550">
    <property type="protein sequence ID" value="AAK49824.1"/>
    <property type="status" value="ALT_INIT"/>
    <property type="molecule type" value="mRNA"/>
</dbReference>
<dbReference type="EMBL" id="AB011126">
    <property type="protein sequence ID" value="BAA25480.1"/>
    <property type="status" value="ALT_INIT"/>
    <property type="molecule type" value="mRNA"/>
</dbReference>
<dbReference type="EMBL" id="AK000975">
    <property type="protein sequence ID" value="BAA91451.1"/>
    <property type="status" value="ALT_INIT"/>
    <property type="molecule type" value="mRNA"/>
</dbReference>
<dbReference type="EMBL" id="AK023681">
    <property type="protein sequence ID" value="BAB14638.1"/>
    <property type="molecule type" value="mRNA"/>
</dbReference>
<dbReference type="EMBL" id="AL136141">
    <property type="status" value="NOT_ANNOTATED_CDS"/>
    <property type="molecule type" value="Genomic_DNA"/>
</dbReference>
<dbReference type="EMBL" id="AL158207">
    <property type="status" value="NOT_ANNOTATED_CDS"/>
    <property type="molecule type" value="Genomic_DNA"/>
</dbReference>
<dbReference type="EMBL" id="BC062463">
    <property type="protein sequence ID" value="AAH62463.1"/>
    <property type="status" value="ALT_SEQ"/>
    <property type="molecule type" value="mRNA"/>
</dbReference>
<dbReference type="EMBL" id="BC101755">
    <property type="protein sequence ID" value="AAI01756.1"/>
    <property type="molecule type" value="mRNA"/>
</dbReference>
<dbReference type="EMBL" id="BC143513">
    <property type="protein sequence ID" value="AAI43514.1"/>
    <property type="molecule type" value="mRNA"/>
</dbReference>
<dbReference type="CCDS" id="CCDS48040.1">
    <molecule id="Q96RU3-1"/>
</dbReference>
<dbReference type="CCDS" id="CCDS87699.1">
    <molecule id="Q96RU3-3"/>
</dbReference>
<dbReference type="RefSeq" id="NP_001350684.1">
    <molecule id="Q96RU3-3"/>
    <property type="nucleotide sequence ID" value="NM_001363755.1"/>
</dbReference>
<dbReference type="RefSeq" id="NP_055848.1">
    <molecule id="Q96RU3-1"/>
    <property type="nucleotide sequence ID" value="NM_015033.3"/>
</dbReference>
<dbReference type="RefSeq" id="XP_005251880.1">
    <molecule id="Q96RU3-2"/>
    <property type="nucleotide sequence ID" value="XM_005251823.4"/>
</dbReference>
<dbReference type="RefSeq" id="XP_005251881.1">
    <molecule id="Q96RU3-5"/>
    <property type="nucleotide sequence ID" value="XM_005251824.3"/>
</dbReference>
<dbReference type="RefSeq" id="XP_005251886.1">
    <property type="nucleotide sequence ID" value="XM_005251829.2"/>
</dbReference>
<dbReference type="PDB" id="2EFL">
    <property type="method" value="X-ray"/>
    <property type="resolution" value="2.61 A"/>
    <property type="chains" value="A=1-300"/>
</dbReference>
<dbReference type="PDBsum" id="2EFL"/>
<dbReference type="SMR" id="Q96RU3"/>
<dbReference type="BioGRID" id="116686">
    <property type="interactions" value="123"/>
</dbReference>
<dbReference type="DIP" id="DIP-35355N"/>
<dbReference type="ELM" id="Q96RU3"/>
<dbReference type="FunCoup" id="Q96RU3">
    <property type="interactions" value="3233"/>
</dbReference>
<dbReference type="IntAct" id="Q96RU3">
    <property type="interactions" value="38"/>
</dbReference>
<dbReference type="MINT" id="Q96RU3"/>
<dbReference type="STRING" id="9606.ENSP00000413625"/>
<dbReference type="GlyGen" id="Q96RU3">
    <property type="glycosylation" value="2 sites, 1 O-linked glycan (2 sites)"/>
</dbReference>
<dbReference type="iPTMnet" id="Q96RU3"/>
<dbReference type="MetOSite" id="Q96RU3"/>
<dbReference type="PhosphoSitePlus" id="Q96RU3"/>
<dbReference type="BioMuta" id="FNBP1"/>
<dbReference type="DMDM" id="118572321"/>
<dbReference type="jPOST" id="Q96RU3"/>
<dbReference type="MassIVE" id="Q96RU3"/>
<dbReference type="PaxDb" id="9606-ENSP00000413625"/>
<dbReference type="PeptideAtlas" id="Q96RU3"/>
<dbReference type="ProteomicsDB" id="20367"/>
<dbReference type="ProteomicsDB" id="78035">
    <molecule id="Q96RU3-1"/>
</dbReference>
<dbReference type="ProteomicsDB" id="78036">
    <molecule id="Q96RU3-2"/>
</dbReference>
<dbReference type="ProteomicsDB" id="78037">
    <molecule id="Q96RU3-3"/>
</dbReference>
<dbReference type="ProteomicsDB" id="78038">
    <molecule id="Q96RU3-4"/>
</dbReference>
<dbReference type="Pumba" id="Q96RU3"/>
<dbReference type="Antibodypedia" id="31452">
    <property type="antibodies" value="194 antibodies from 30 providers"/>
</dbReference>
<dbReference type="DNASU" id="23048"/>
<dbReference type="Ensembl" id="ENST00000355681.3">
    <molecule id="Q96RU3-3"/>
    <property type="protein sequence ID" value="ENSP00000347907.3"/>
    <property type="gene ID" value="ENSG00000187239.19"/>
</dbReference>
<dbReference type="Ensembl" id="ENST00000446176.7">
    <molecule id="Q96RU3-1"/>
    <property type="protein sequence ID" value="ENSP00000413625.1"/>
    <property type="gene ID" value="ENSG00000187239.19"/>
</dbReference>
<dbReference type="Ensembl" id="ENST00000703532.1">
    <molecule id="Q96RU3-2"/>
    <property type="protein sequence ID" value="ENSP00000515358.1"/>
    <property type="gene ID" value="ENSG00000187239.19"/>
</dbReference>
<dbReference type="GeneID" id="23048"/>
<dbReference type="KEGG" id="hsa:23048"/>
<dbReference type="MANE-Select" id="ENST00000446176.7">
    <property type="protein sequence ID" value="ENSP00000413625.1"/>
    <property type="RefSeq nucleotide sequence ID" value="NM_015033.3"/>
    <property type="RefSeq protein sequence ID" value="NP_055848.1"/>
</dbReference>
<dbReference type="UCSC" id="uc004byw.2">
    <molecule id="Q96RU3-1"/>
    <property type="organism name" value="human"/>
</dbReference>
<dbReference type="AGR" id="HGNC:17069"/>
<dbReference type="CTD" id="23048"/>
<dbReference type="DisGeNET" id="23048"/>
<dbReference type="GeneCards" id="FNBP1"/>
<dbReference type="HGNC" id="HGNC:17069">
    <property type="gene designation" value="FNBP1"/>
</dbReference>
<dbReference type="HPA" id="ENSG00000187239">
    <property type="expression patterns" value="Tissue enhanced (lymphoid)"/>
</dbReference>
<dbReference type="MIM" id="606191">
    <property type="type" value="gene"/>
</dbReference>
<dbReference type="neXtProt" id="NX_Q96RU3"/>
<dbReference type="OpenTargets" id="ENSG00000187239"/>
<dbReference type="PharmGKB" id="PA128394597"/>
<dbReference type="VEuPathDB" id="HostDB:ENSG00000187239"/>
<dbReference type="eggNOG" id="KOG3565">
    <property type="taxonomic scope" value="Eukaryota"/>
</dbReference>
<dbReference type="GeneTree" id="ENSGT00950000183047"/>
<dbReference type="InParanoid" id="Q96RU3"/>
<dbReference type="OMA" id="XQNEGTI"/>
<dbReference type="OrthoDB" id="8783038at2759"/>
<dbReference type="PAN-GO" id="Q96RU3">
    <property type="GO annotations" value="0 GO annotations based on evolutionary models"/>
</dbReference>
<dbReference type="PhylomeDB" id="Q96RU3"/>
<dbReference type="TreeFam" id="TF351162"/>
<dbReference type="PathwayCommons" id="Q96RU3"/>
<dbReference type="Reactome" id="R-HSA-8856828">
    <property type="pathway name" value="Clathrin-mediated endocytosis"/>
</dbReference>
<dbReference type="Reactome" id="R-HSA-9013148">
    <property type="pathway name" value="CDC42 GTPase cycle"/>
</dbReference>
<dbReference type="Reactome" id="R-HSA-9013406">
    <property type="pathway name" value="RHOQ GTPase cycle"/>
</dbReference>
<dbReference type="Reactome" id="R-HSA-9013409">
    <property type="pathway name" value="RHOJ GTPase cycle"/>
</dbReference>
<dbReference type="Reactome" id="R-HSA-9696270">
    <property type="pathway name" value="RND2 GTPase cycle"/>
</dbReference>
<dbReference type="SignaLink" id="Q96RU3"/>
<dbReference type="BioGRID-ORCS" id="23048">
    <property type="hits" value="20 hits in 1152 CRISPR screens"/>
</dbReference>
<dbReference type="ChiTaRS" id="FNBP1">
    <property type="organism name" value="human"/>
</dbReference>
<dbReference type="EvolutionaryTrace" id="Q96RU3"/>
<dbReference type="GeneWiki" id="FNBP1"/>
<dbReference type="GenomeRNAi" id="23048"/>
<dbReference type="Pharos" id="Q96RU3">
    <property type="development level" value="Tbio"/>
</dbReference>
<dbReference type="PRO" id="PR:Q96RU3"/>
<dbReference type="Proteomes" id="UP000005640">
    <property type="component" value="Chromosome 9"/>
</dbReference>
<dbReference type="RNAct" id="Q96RU3">
    <property type="molecule type" value="protein"/>
</dbReference>
<dbReference type="Bgee" id="ENSG00000187239">
    <property type="expression patterns" value="Expressed in corpus callosum and 211 other cell types or tissues"/>
</dbReference>
<dbReference type="ExpressionAtlas" id="Q96RU3">
    <property type="expression patterns" value="baseline and differential"/>
</dbReference>
<dbReference type="GO" id="GO:0005938">
    <property type="term" value="C:cell cortex"/>
    <property type="evidence" value="ECO:0007669"/>
    <property type="project" value="UniProtKB-SubCell"/>
</dbReference>
<dbReference type="GO" id="GO:0005905">
    <property type="term" value="C:clathrin-coated pit"/>
    <property type="evidence" value="ECO:0007669"/>
    <property type="project" value="UniProtKB-SubCell"/>
</dbReference>
<dbReference type="GO" id="GO:0031410">
    <property type="term" value="C:cytoplasmic vesicle"/>
    <property type="evidence" value="ECO:0007669"/>
    <property type="project" value="UniProtKB-KW"/>
</dbReference>
<dbReference type="GO" id="GO:0005856">
    <property type="term" value="C:cytoskeleton"/>
    <property type="evidence" value="ECO:0007669"/>
    <property type="project" value="UniProtKB-SubCell"/>
</dbReference>
<dbReference type="GO" id="GO:0005829">
    <property type="term" value="C:cytosol"/>
    <property type="evidence" value="ECO:0000304"/>
    <property type="project" value="Reactome"/>
</dbReference>
<dbReference type="GO" id="GO:0043231">
    <property type="term" value="C:intracellular membrane-bounded organelle"/>
    <property type="evidence" value="ECO:0000314"/>
    <property type="project" value="HPA"/>
</dbReference>
<dbReference type="GO" id="GO:0005764">
    <property type="term" value="C:lysosome"/>
    <property type="evidence" value="ECO:0007669"/>
    <property type="project" value="UniProtKB-SubCell"/>
</dbReference>
<dbReference type="GO" id="GO:0005886">
    <property type="term" value="C:plasma membrane"/>
    <property type="evidence" value="ECO:0000314"/>
    <property type="project" value="HPA"/>
</dbReference>
<dbReference type="GO" id="GO:0042802">
    <property type="term" value="F:identical protein binding"/>
    <property type="evidence" value="ECO:0000353"/>
    <property type="project" value="IntAct"/>
</dbReference>
<dbReference type="GO" id="GO:0008289">
    <property type="term" value="F:lipid binding"/>
    <property type="evidence" value="ECO:0007669"/>
    <property type="project" value="UniProtKB-KW"/>
</dbReference>
<dbReference type="GO" id="GO:0006897">
    <property type="term" value="P:endocytosis"/>
    <property type="evidence" value="ECO:0007669"/>
    <property type="project" value="UniProtKB-KW"/>
</dbReference>
<dbReference type="GO" id="GO:0007165">
    <property type="term" value="P:signal transduction"/>
    <property type="evidence" value="ECO:0007669"/>
    <property type="project" value="InterPro"/>
</dbReference>
<dbReference type="CDD" id="cd07676">
    <property type="entry name" value="F-BAR_FBP17"/>
    <property type="match status" value="1"/>
</dbReference>
<dbReference type="CDD" id="cd11629">
    <property type="entry name" value="HR1_FBP17"/>
    <property type="match status" value="1"/>
</dbReference>
<dbReference type="FunFam" id="1.20.1270.60:FF:000002">
    <property type="entry name" value="Formin-binding protein 1-like isoform 1"/>
    <property type="match status" value="1"/>
</dbReference>
<dbReference type="FunFam" id="2.30.30.40:FF:000017">
    <property type="entry name" value="Formin-binding protein 1-like isoform 1"/>
    <property type="match status" value="1"/>
</dbReference>
<dbReference type="Gene3D" id="6.10.140.470">
    <property type="match status" value="1"/>
</dbReference>
<dbReference type="Gene3D" id="1.20.1270.60">
    <property type="entry name" value="Arfaptin homology (AH) domain/BAR domain"/>
    <property type="match status" value="1"/>
</dbReference>
<dbReference type="Gene3D" id="2.30.30.40">
    <property type="entry name" value="SH3 Domains"/>
    <property type="match status" value="1"/>
</dbReference>
<dbReference type="InterPro" id="IPR027267">
    <property type="entry name" value="AH/BAR_dom_sf"/>
</dbReference>
<dbReference type="InterPro" id="IPR031160">
    <property type="entry name" value="F_BAR"/>
</dbReference>
<dbReference type="InterPro" id="IPR001060">
    <property type="entry name" value="FCH_dom"/>
</dbReference>
<dbReference type="InterPro" id="IPR037449">
    <property type="entry name" value="FNBP1_F-BAR"/>
</dbReference>
<dbReference type="InterPro" id="IPR011072">
    <property type="entry name" value="HR1_rho-bd"/>
</dbReference>
<dbReference type="InterPro" id="IPR036028">
    <property type="entry name" value="SH3-like_dom_sf"/>
</dbReference>
<dbReference type="InterPro" id="IPR001452">
    <property type="entry name" value="SH3_domain"/>
</dbReference>
<dbReference type="PANTHER" id="PTHR15735">
    <property type="entry name" value="FCH AND DOUBLE SH3 DOMAINS PROTEIN"/>
    <property type="match status" value="1"/>
</dbReference>
<dbReference type="PANTHER" id="PTHR15735:SF13">
    <property type="entry name" value="FORMIN-BINDING PROTEIN 1"/>
    <property type="match status" value="1"/>
</dbReference>
<dbReference type="Pfam" id="PF00611">
    <property type="entry name" value="FCH"/>
    <property type="match status" value="1"/>
</dbReference>
<dbReference type="Pfam" id="PF00018">
    <property type="entry name" value="SH3_1"/>
    <property type="match status" value="1"/>
</dbReference>
<dbReference type="SMART" id="SM00055">
    <property type="entry name" value="FCH"/>
    <property type="match status" value="1"/>
</dbReference>
<dbReference type="SMART" id="SM00326">
    <property type="entry name" value="SH3"/>
    <property type="match status" value="1"/>
</dbReference>
<dbReference type="SUPFAM" id="SSF103657">
    <property type="entry name" value="BAR/IMD domain-like"/>
    <property type="match status" value="1"/>
</dbReference>
<dbReference type="SUPFAM" id="SSF50044">
    <property type="entry name" value="SH3-domain"/>
    <property type="match status" value="1"/>
</dbReference>
<dbReference type="PROSITE" id="PS51741">
    <property type="entry name" value="F_BAR"/>
    <property type="match status" value="1"/>
</dbReference>
<dbReference type="PROSITE" id="PS51860">
    <property type="entry name" value="REM_1"/>
    <property type="match status" value="1"/>
</dbReference>
<dbReference type="PROSITE" id="PS50002">
    <property type="entry name" value="SH3"/>
    <property type="match status" value="1"/>
</dbReference>
<name>FNBP1_HUMAN</name>
<protein>
    <recommendedName>
        <fullName>Formin-binding protein 1</fullName>
    </recommendedName>
    <alternativeName>
        <fullName>Formin-binding protein 17</fullName>
        <shortName>hFBP17</shortName>
    </alternativeName>
</protein>